<reference key="1">
    <citation type="journal article" date="1993" name="Mol. Cell. Biol.">
        <title>MKK1 and MKK2, which encode Saccharomyces cerevisiae mitogen-activated protein kinase-kinase homologs, function in the pathway mediated by protein kinase C.</title>
        <authorList>
            <person name="Irie K."/>
            <person name="Takase M."/>
            <person name="Lee K.S."/>
            <person name="Levin D.E."/>
            <person name="Araki H."/>
            <person name="Matsumoto K."/>
            <person name="Oshima Y."/>
        </authorList>
    </citation>
    <scope>NUCLEOTIDE SEQUENCE [GENOMIC DNA]</scope>
</reference>
<reference key="2">
    <citation type="journal article" date="1996" name="Yeast">
        <title>Sequence and analysis of a 26.9 kb fragment from chromosome XV of the yeast Saccharomyces cerevisiae.</title>
        <authorList>
            <person name="Boyer J."/>
            <person name="Michaux G."/>
            <person name="Fairhead C."/>
            <person name="Gaillon L."/>
            <person name="Dujon B."/>
        </authorList>
    </citation>
    <scope>NUCLEOTIDE SEQUENCE [GENOMIC DNA]</scope>
    <source>
        <strain>ATCC 96604 / S288c / FY1679</strain>
    </source>
</reference>
<reference key="3">
    <citation type="journal article" date="1997" name="Nature">
        <title>The nucleotide sequence of Saccharomyces cerevisiae chromosome XV.</title>
        <authorList>
            <person name="Dujon B."/>
            <person name="Albermann K."/>
            <person name="Aldea M."/>
            <person name="Alexandraki D."/>
            <person name="Ansorge W."/>
            <person name="Arino J."/>
            <person name="Benes V."/>
            <person name="Bohn C."/>
            <person name="Bolotin-Fukuhara M."/>
            <person name="Bordonne R."/>
            <person name="Boyer J."/>
            <person name="Camasses A."/>
            <person name="Casamayor A."/>
            <person name="Casas C."/>
            <person name="Cheret G."/>
            <person name="Cziepluch C."/>
            <person name="Daignan-Fornier B."/>
            <person name="Dang V.-D."/>
            <person name="de Haan M."/>
            <person name="Delius H."/>
            <person name="Durand P."/>
            <person name="Fairhead C."/>
            <person name="Feldmann H."/>
            <person name="Gaillon L."/>
            <person name="Galisson F."/>
            <person name="Gamo F.-J."/>
            <person name="Gancedo C."/>
            <person name="Goffeau A."/>
            <person name="Goulding S.E."/>
            <person name="Grivell L.A."/>
            <person name="Habbig B."/>
            <person name="Hand N.J."/>
            <person name="Hani J."/>
            <person name="Hattenhorst U."/>
            <person name="Hebling U."/>
            <person name="Hernando Y."/>
            <person name="Herrero E."/>
            <person name="Heumann K."/>
            <person name="Hiesel R."/>
            <person name="Hilger F."/>
            <person name="Hofmann B."/>
            <person name="Hollenberg C.P."/>
            <person name="Hughes B."/>
            <person name="Jauniaux J.-C."/>
            <person name="Kalogeropoulos A."/>
            <person name="Katsoulou C."/>
            <person name="Kordes E."/>
            <person name="Lafuente M.J."/>
            <person name="Landt O."/>
            <person name="Louis E.J."/>
            <person name="Maarse A.C."/>
            <person name="Madania A."/>
            <person name="Mannhaupt G."/>
            <person name="Marck C."/>
            <person name="Martin R.P."/>
            <person name="Mewes H.-W."/>
            <person name="Michaux G."/>
            <person name="Paces V."/>
            <person name="Parle-McDermott A.G."/>
            <person name="Pearson B.M."/>
            <person name="Perrin A."/>
            <person name="Pettersson B."/>
            <person name="Poch O."/>
            <person name="Pohl T.M."/>
            <person name="Poirey R."/>
            <person name="Portetelle D."/>
            <person name="Pujol A."/>
            <person name="Purnelle B."/>
            <person name="Ramezani Rad M."/>
            <person name="Rechmann S."/>
            <person name="Schwager C."/>
            <person name="Schweizer M."/>
            <person name="Sor F."/>
            <person name="Sterky F."/>
            <person name="Tarassov I.A."/>
            <person name="Teodoru C."/>
            <person name="Tettelin H."/>
            <person name="Thierry A."/>
            <person name="Tobiasch E."/>
            <person name="Tzermia M."/>
            <person name="Uhlen M."/>
            <person name="Unseld M."/>
            <person name="Valens M."/>
            <person name="Vandenbol M."/>
            <person name="Vetter I."/>
            <person name="Vlcek C."/>
            <person name="Voet M."/>
            <person name="Volckaert G."/>
            <person name="Voss H."/>
            <person name="Wambutt R."/>
            <person name="Wedler H."/>
            <person name="Wiemann S."/>
            <person name="Winsor B."/>
            <person name="Wolfe K.H."/>
            <person name="Zollner A."/>
            <person name="Zumstein E."/>
            <person name="Kleine K."/>
        </authorList>
    </citation>
    <scope>NUCLEOTIDE SEQUENCE [LARGE SCALE GENOMIC DNA]</scope>
    <source>
        <strain>ATCC 204508 / S288c</strain>
    </source>
</reference>
<reference key="4">
    <citation type="journal article" date="2014" name="G3 (Bethesda)">
        <title>The reference genome sequence of Saccharomyces cerevisiae: Then and now.</title>
        <authorList>
            <person name="Engel S.R."/>
            <person name="Dietrich F.S."/>
            <person name="Fisk D.G."/>
            <person name="Binkley G."/>
            <person name="Balakrishnan R."/>
            <person name="Costanzo M.C."/>
            <person name="Dwight S.S."/>
            <person name="Hitz B.C."/>
            <person name="Karra K."/>
            <person name="Nash R.S."/>
            <person name="Weng S."/>
            <person name="Wong E.D."/>
            <person name="Lloyd P."/>
            <person name="Skrzypek M.S."/>
            <person name="Miyasato S.R."/>
            <person name="Simison M."/>
            <person name="Cherry J.M."/>
        </authorList>
    </citation>
    <scope>GENOME REANNOTATION</scope>
    <source>
        <strain>ATCC 204508 / S288c</strain>
    </source>
</reference>
<reference key="5">
    <citation type="journal article" date="2005" name="Nucleic Acids Res.">
        <title>Mapping of transcription start sites in Saccharomyces cerevisiae using 5' SAGE.</title>
        <authorList>
            <person name="Zhang Z."/>
            <person name="Dietrich F.S."/>
        </authorList>
    </citation>
    <scope>NUCLEOTIDE SEQUENCE [MRNA] OF 1-74</scope>
    <source>
        <strain>ATCC 208353 / W303-1A</strain>
    </source>
</reference>
<reference key="6">
    <citation type="journal article" date="2003" name="Nature">
        <title>Global analysis of protein expression in yeast.</title>
        <authorList>
            <person name="Ghaemmaghami S."/>
            <person name="Huh W.-K."/>
            <person name="Bower K."/>
            <person name="Howson R.W."/>
            <person name="Belle A."/>
            <person name="Dephoure N."/>
            <person name="O'Shea E.K."/>
            <person name="Weissman J.S."/>
        </authorList>
    </citation>
    <scope>LEVEL OF PROTEIN EXPRESSION [LARGE SCALE ANALYSIS]</scope>
</reference>
<reference key="7">
    <citation type="journal article" date="2008" name="Mol. Cell. Proteomics">
        <title>A multidimensional chromatography technology for in-depth phosphoproteome analysis.</title>
        <authorList>
            <person name="Albuquerque C.P."/>
            <person name="Smolka M.B."/>
            <person name="Payne S.H."/>
            <person name="Bafna V."/>
            <person name="Eng J."/>
            <person name="Zhou H."/>
        </authorList>
    </citation>
    <scope>PHOSPHORYLATION [LARGE SCALE ANALYSIS] AT SER-192</scope>
    <scope>IDENTIFICATION BY MASS SPECTROMETRY [LARGE SCALE ANALYSIS]</scope>
</reference>
<reference key="8">
    <citation type="journal article" date="2009" name="Science">
        <title>Global analysis of Cdk1 substrate phosphorylation sites provides insights into evolution.</title>
        <authorList>
            <person name="Holt L.J."/>
            <person name="Tuch B.B."/>
            <person name="Villen J."/>
            <person name="Johnson A.D."/>
            <person name="Gygi S.P."/>
            <person name="Morgan D.O."/>
        </authorList>
    </citation>
    <scope>IDENTIFICATION BY MASS SPECTROMETRY [LARGE SCALE ANALYSIS]</scope>
</reference>
<gene>
    <name type="primary">MKK1</name>
    <name type="synonym">SSP32</name>
    <name type="ordered locus">YOR231W</name>
    <name type="ORF">O5095</name>
</gene>
<organism>
    <name type="scientific">Saccharomyces cerevisiae (strain ATCC 204508 / S288c)</name>
    <name type="common">Baker's yeast</name>
    <dbReference type="NCBI Taxonomy" id="559292"/>
    <lineage>
        <taxon>Eukaryota</taxon>
        <taxon>Fungi</taxon>
        <taxon>Dikarya</taxon>
        <taxon>Ascomycota</taxon>
        <taxon>Saccharomycotina</taxon>
        <taxon>Saccharomycetes</taxon>
        <taxon>Saccharomycetales</taxon>
        <taxon>Saccharomycetaceae</taxon>
        <taxon>Saccharomyces</taxon>
    </lineage>
</organism>
<proteinExistence type="evidence at protein level"/>
<dbReference type="EC" id="2.7.12.2"/>
<dbReference type="EMBL" id="D13001">
    <property type="protein sequence ID" value="BAA02364.1"/>
    <property type="molecule type" value="Genomic_DNA"/>
</dbReference>
<dbReference type="EMBL" id="Z75139">
    <property type="protein sequence ID" value="CAA99451.1"/>
    <property type="molecule type" value="Genomic_DNA"/>
</dbReference>
<dbReference type="EMBL" id="AY899252">
    <property type="protein sequence ID" value="AAX83937.1"/>
    <property type="molecule type" value="mRNA"/>
</dbReference>
<dbReference type="EMBL" id="BK006948">
    <property type="protein sequence ID" value="DAA11001.1"/>
    <property type="molecule type" value="Genomic_DNA"/>
</dbReference>
<dbReference type="PIR" id="A48069">
    <property type="entry name" value="A48069"/>
</dbReference>
<dbReference type="RefSeq" id="NP_014874.1">
    <property type="nucleotide sequence ID" value="NM_001183650.1"/>
</dbReference>
<dbReference type="SMR" id="P32490"/>
<dbReference type="BioGRID" id="34624">
    <property type="interactions" value="178"/>
</dbReference>
<dbReference type="DIP" id="DIP-2224N"/>
<dbReference type="FunCoup" id="P32490">
    <property type="interactions" value="680"/>
</dbReference>
<dbReference type="IntAct" id="P32490">
    <property type="interactions" value="21"/>
</dbReference>
<dbReference type="MINT" id="P32490"/>
<dbReference type="STRING" id="4932.YOR231W"/>
<dbReference type="iPTMnet" id="P32490"/>
<dbReference type="PaxDb" id="4932-YOR231W"/>
<dbReference type="PeptideAtlas" id="P32490"/>
<dbReference type="EnsemblFungi" id="YOR231W_mRNA">
    <property type="protein sequence ID" value="YOR231W"/>
    <property type="gene ID" value="YOR231W"/>
</dbReference>
<dbReference type="GeneID" id="854406"/>
<dbReference type="KEGG" id="sce:YOR231W"/>
<dbReference type="AGR" id="SGD:S000005757"/>
<dbReference type="SGD" id="S000005757">
    <property type="gene designation" value="MKK1"/>
</dbReference>
<dbReference type="VEuPathDB" id="FungiDB:YOR231W"/>
<dbReference type="eggNOG" id="KOG0581">
    <property type="taxonomic scope" value="Eukaryota"/>
</dbReference>
<dbReference type="GeneTree" id="ENSGT00940000176752"/>
<dbReference type="HOGENOM" id="CLU_000288_63_23_1"/>
<dbReference type="InParanoid" id="P32490"/>
<dbReference type="OMA" id="ELNIVWS"/>
<dbReference type="OrthoDB" id="10252354at2759"/>
<dbReference type="BioCyc" id="YEAST:G3O-33729-MONOMER"/>
<dbReference type="BRENDA" id="2.7.12.2">
    <property type="organism ID" value="984"/>
</dbReference>
<dbReference type="Reactome" id="R-SCE-112411">
    <property type="pathway name" value="MAPK1 (ERK2) activation"/>
</dbReference>
<dbReference type="Reactome" id="R-SCE-445144">
    <property type="pathway name" value="Signal transduction by L1"/>
</dbReference>
<dbReference type="Reactome" id="R-SCE-5674135">
    <property type="pathway name" value="MAP2K and MAPK activation"/>
</dbReference>
<dbReference type="Reactome" id="R-SCE-5674499">
    <property type="pathway name" value="Negative feedback regulation of MAPK pathway"/>
</dbReference>
<dbReference type="BioGRID-ORCS" id="854406">
    <property type="hits" value="0 hits in 13 CRISPR screens"/>
</dbReference>
<dbReference type="PRO" id="PR:P32490"/>
<dbReference type="Proteomes" id="UP000002311">
    <property type="component" value="Chromosome XV"/>
</dbReference>
<dbReference type="RNAct" id="P32490">
    <property type="molecule type" value="protein"/>
</dbReference>
<dbReference type="GO" id="GO:0005935">
    <property type="term" value="C:cellular bud neck"/>
    <property type="evidence" value="ECO:0000314"/>
    <property type="project" value="SGD"/>
</dbReference>
<dbReference type="GO" id="GO:0005934">
    <property type="term" value="C:cellular bud tip"/>
    <property type="evidence" value="ECO:0000314"/>
    <property type="project" value="SGD"/>
</dbReference>
<dbReference type="GO" id="GO:0005737">
    <property type="term" value="C:cytoplasm"/>
    <property type="evidence" value="ECO:0000314"/>
    <property type="project" value="SGD"/>
</dbReference>
<dbReference type="GO" id="GO:0043332">
    <property type="term" value="C:mating projection tip"/>
    <property type="evidence" value="ECO:0000314"/>
    <property type="project" value="SGD"/>
</dbReference>
<dbReference type="GO" id="GO:0005524">
    <property type="term" value="F:ATP binding"/>
    <property type="evidence" value="ECO:0007669"/>
    <property type="project" value="UniProtKB-KW"/>
</dbReference>
<dbReference type="GO" id="GO:0004708">
    <property type="term" value="F:MAP kinase kinase activity"/>
    <property type="evidence" value="ECO:0000250"/>
    <property type="project" value="SGD"/>
</dbReference>
<dbReference type="GO" id="GO:0004672">
    <property type="term" value="F:protein kinase activity"/>
    <property type="evidence" value="ECO:0007005"/>
    <property type="project" value="SGD"/>
</dbReference>
<dbReference type="GO" id="GO:0106310">
    <property type="term" value="F:protein serine kinase activity"/>
    <property type="evidence" value="ECO:0007669"/>
    <property type="project" value="RHEA"/>
</dbReference>
<dbReference type="GO" id="GO:0004674">
    <property type="term" value="F:protein serine/threonine kinase activity"/>
    <property type="evidence" value="ECO:0007669"/>
    <property type="project" value="UniProtKB-KW"/>
</dbReference>
<dbReference type="GO" id="GO:0004713">
    <property type="term" value="F:protein tyrosine kinase activity"/>
    <property type="evidence" value="ECO:0007669"/>
    <property type="project" value="RHEA"/>
</dbReference>
<dbReference type="GO" id="GO:0000196">
    <property type="term" value="P:cell integrity MAPK cascade"/>
    <property type="evidence" value="ECO:0000316"/>
    <property type="project" value="SGD"/>
</dbReference>
<dbReference type="GO" id="GO:0000425">
    <property type="term" value="P:pexophagy"/>
    <property type="evidence" value="ECO:0000316"/>
    <property type="project" value="SGD"/>
</dbReference>
<dbReference type="GO" id="GO:0060237">
    <property type="term" value="P:regulation of fungal-type cell wall organization"/>
    <property type="evidence" value="ECO:0000316"/>
    <property type="project" value="SGD"/>
</dbReference>
<dbReference type="GO" id="GO:0007165">
    <property type="term" value="P:signal transduction"/>
    <property type="evidence" value="ECO:0000315"/>
    <property type="project" value="SGD"/>
</dbReference>
<dbReference type="FunFam" id="3.30.200.20:FF:000294">
    <property type="entry name" value="Map kinase kinase"/>
    <property type="match status" value="1"/>
</dbReference>
<dbReference type="FunFam" id="1.10.510.10:FF:000263">
    <property type="entry name" value="MAP kinase skh1/pek1"/>
    <property type="match status" value="1"/>
</dbReference>
<dbReference type="Gene3D" id="3.30.200.20">
    <property type="entry name" value="Phosphorylase Kinase, domain 1"/>
    <property type="match status" value="1"/>
</dbReference>
<dbReference type="Gene3D" id="1.10.510.10">
    <property type="entry name" value="Transferase(Phosphotransferase) domain 1"/>
    <property type="match status" value="1"/>
</dbReference>
<dbReference type="InterPro" id="IPR011009">
    <property type="entry name" value="Kinase-like_dom_sf"/>
</dbReference>
<dbReference type="InterPro" id="IPR000719">
    <property type="entry name" value="Prot_kinase_dom"/>
</dbReference>
<dbReference type="InterPro" id="IPR017441">
    <property type="entry name" value="Protein_kinase_ATP_BS"/>
</dbReference>
<dbReference type="InterPro" id="IPR008271">
    <property type="entry name" value="Ser/Thr_kinase_AS"/>
</dbReference>
<dbReference type="PANTHER" id="PTHR48013">
    <property type="entry name" value="DUAL SPECIFICITY MITOGEN-ACTIVATED PROTEIN KINASE KINASE 5-RELATED"/>
    <property type="match status" value="1"/>
</dbReference>
<dbReference type="PANTHER" id="PTHR48013:SF6">
    <property type="entry name" value="MAP KINASE KINASE MKK1_SSP32-RELATED"/>
    <property type="match status" value="1"/>
</dbReference>
<dbReference type="Pfam" id="PF00069">
    <property type="entry name" value="Pkinase"/>
    <property type="match status" value="1"/>
</dbReference>
<dbReference type="SMART" id="SM00220">
    <property type="entry name" value="S_TKc"/>
    <property type="match status" value="1"/>
</dbReference>
<dbReference type="SUPFAM" id="SSF56112">
    <property type="entry name" value="Protein kinase-like (PK-like)"/>
    <property type="match status" value="1"/>
</dbReference>
<dbReference type="PROSITE" id="PS00107">
    <property type="entry name" value="PROTEIN_KINASE_ATP"/>
    <property type="match status" value="1"/>
</dbReference>
<dbReference type="PROSITE" id="PS50011">
    <property type="entry name" value="PROTEIN_KINASE_DOM"/>
    <property type="match status" value="1"/>
</dbReference>
<dbReference type="PROSITE" id="PS00108">
    <property type="entry name" value="PROTEIN_KINASE_ST"/>
    <property type="match status" value="1"/>
</dbReference>
<accession>P32490</accession>
<accession>D6W2T5</accession>
<accession>Q2VQW6</accession>
<comment type="function">
    <text>Involved in a signal transduction pathway that play a role in yeast cell morphogenesis and cell growth. This pathway seems to start by SMP3; then involve the kinase PKC1 that may act on the BCK1 kinase that then phosphorylates MKK1 and MKK2 which themselves phosphorylate the MPK1 kinase.</text>
</comment>
<comment type="catalytic activity">
    <reaction>
        <text>L-seryl-[protein] + ATP = O-phospho-L-seryl-[protein] + ADP + H(+)</text>
        <dbReference type="Rhea" id="RHEA:17989"/>
        <dbReference type="Rhea" id="RHEA-COMP:9863"/>
        <dbReference type="Rhea" id="RHEA-COMP:11604"/>
        <dbReference type="ChEBI" id="CHEBI:15378"/>
        <dbReference type="ChEBI" id="CHEBI:29999"/>
        <dbReference type="ChEBI" id="CHEBI:30616"/>
        <dbReference type="ChEBI" id="CHEBI:83421"/>
        <dbReference type="ChEBI" id="CHEBI:456216"/>
        <dbReference type="EC" id="2.7.12.2"/>
    </reaction>
</comment>
<comment type="catalytic activity">
    <reaction>
        <text>L-threonyl-[protein] + ATP = O-phospho-L-threonyl-[protein] + ADP + H(+)</text>
        <dbReference type="Rhea" id="RHEA:46608"/>
        <dbReference type="Rhea" id="RHEA-COMP:11060"/>
        <dbReference type="Rhea" id="RHEA-COMP:11605"/>
        <dbReference type="ChEBI" id="CHEBI:15378"/>
        <dbReference type="ChEBI" id="CHEBI:30013"/>
        <dbReference type="ChEBI" id="CHEBI:30616"/>
        <dbReference type="ChEBI" id="CHEBI:61977"/>
        <dbReference type="ChEBI" id="CHEBI:456216"/>
        <dbReference type="EC" id="2.7.12.2"/>
    </reaction>
</comment>
<comment type="catalytic activity">
    <reaction>
        <text>L-tyrosyl-[protein] + ATP = O-phospho-L-tyrosyl-[protein] + ADP + H(+)</text>
        <dbReference type="Rhea" id="RHEA:10596"/>
        <dbReference type="Rhea" id="RHEA-COMP:10136"/>
        <dbReference type="Rhea" id="RHEA-COMP:20101"/>
        <dbReference type="ChEBI" id="CHEBI:15378"/>
        <dbReference type="ChEBI" id="CHEBI:30616"/>
        <dbReference type="ChEBI" id="CHEBI:46858"/>
        <dbReference type="ChEBI" id="CHEBI:61978"/>
        <dbReference type="ChEBI" id="CHEBI:456216"/>
        <dbReference type="EC" id="2.7.12.2"/>
    </reaction>
</comment>
<comment type="interaction">
    <interactant intactId="EBI-10968">
        <id>P32490</id>
    </interactant>
    <interactant intactId="EBI-7595">
        <id>Q12263</id>
        <label>GIN4</label>
    </interactant>
    <organismsDiffer>false</organismsDiffer>
    <experiments>2</experiments>
</comment>
<comment type="interaction">
    <interactant intactId="EBI-10968">
        <id>P32490</id>
    </interactant>
    <interactant intactId="EBI-17372">
        <id>Q00772</id>
        <label>SLT2</label>
    </interactant>
    <organismsDiffer>false</organismsDiffer>
    <experiments>4</experiments>
</comment>
<comment type="interaction">
    <interactant intactId="EBI-10968">
        <id>P32490</id>
    </interactant>
    <interactant intactId="EBI-18259">
        <id>P23561</id>
        <label>STE11</label>
    </interactant>
    <organismsDiffer>false</organismsDiffer>
    <experiments>2</experiments>
</comment>
<comment type="miscellaneous">
    <text evidence="4">Present with 1040 molecules/cell in log phase SD medium.</text>
</comment>
<comment type="similarity">
    <text evidence="5">Belongs to the protein kinase superfamily. STE Ser/Thr protein kinase family. MAP kinase kinase subfamily.</text>
</comment>
<sequence length="508" mass="56720">MASLFRPPESAKCNPNSPRLKLPLLRNNQVDENNIYLTSNGSSTTAYSSHTPEPLTSSTSTLFSQTRLHPSDSSMTLNTMKKRPAPPSLPSLSINSQSKCKTLPELVPIADVSDGKHDLGLKQRVIAENELSGNSDLTPSSMASPFSHTNTSSPYLRNDLSNSVGSDFSNLISAYEQSSSPIKSSSQPKSSSESYIDLNSVRDVDQLDENGWKYANLKDRIETLGILGEGAGGSVSKCKLKNGSKIFALKVINTLNTDPEYQKQIFRELQFNRSFQSEYIVRYYGMFTDDENSSIYIAMEYMGGRSLDAIYKNLLERGGRISEKVLGKIAEAVLRGLSYLHEKKVIHRDIKPQNILLNENGQVKLCDFGVSGEAVNSLATTFTGTSFYMAPERIQGQPYSVTSDVWSLGLTILEVANGKFPCSSEKMAANIAPFELLMWILTFTPELKDEPESNIIWSPSFKSFIDYCLKKDSRERPSPRQMINHPWIKGQMKKNVNMEKFVRKCWKD</sequence>
<keyword id="KW-0067">ATP-binding</keyword>
<keyword id="KW-0418">Kinase</keyword>
<keyword id="KW-0547">Nucleotide-binding</keyword>
<keyword id="KW-0597">Phosphoprotein</keyword>
<keyword id="KW-1185">Reference proteome</keyword>
<keyword id="KW-0723">Serine/threonine-protein kinase</keyword>
<keyword id="KW-0808">Transferase</keyword>
<feature type="chain" id="PRO_0000086332" description="MAP kinase kinase MKK1/SSP32">
    <location>
        <begin position="1"/>
        <end position="508"/>
    </location>
</feature>
<feature type="domain" description="Protein kinase" evidence="1">
    <location>
        <begin position="221"/>
        <end position="488"/>
    </location>
</feature>
<feature type="region of interest" description="Disordered" evidence="3">
    <location>
        <begin position="1"/>
        <end position="21"/>
    </location>
</feature>
<feature type="region of interest" description="Disordered" evidence="3">
    <location>
        <begin position="35"/>
        <end position="95"/>
    </location>
</feature>
<feature type="region of interest" description="Disordered" evidence="3">
    <location>
        <begin position="130"/>
        <end position="158"/>
    </location>
</feature>
<feature type="compositionally biased region" description="Polar residues" evidence="3">
    <location>
        <begin position="35"/>
        <end position="47"/>
    </location>
</feature>
<feature type="compositionally biased region" description="Low complexity" evidence="3">
    <location>
        <begin position="48"/>
        <end position="66"/>
    </location>
</feature>
<feature type="compositionally biased region" description="Polar residues" evidence="3">
    <location>
        <begin position="67"/>
        <end position="79"/>
    </location>
</feature>
<feature type="compositionally biased region" description="Polar residues" evidence="3">
    <location>
        <begin position="131"/>
        <end position="158"/>
    </location>
</feature>
<feature type="active site" description="Proton acceptor" evidence="1 2">
    <location>
        <position position="349"/>
    </location>
</feature>
<feature type="binding site" evidence="1">
    <location>
        <begin position="227"/>
        <end position="235"/>
    </location>
    <ligand>
        <name>ATP</name>
        <dbReference type="ChEBI" id="CHEBI:30616"/>
    </ligand>
</feature>
<feature type="binding site" evidence="1">
    <location>
        <position position="250"/>
    </location>
    <ligand>
        <name>ATP</name>
        <dbReference type="ChEBI" id="CHEBI:30616"/>
    </ligand>
</feature>
<feature type="modified residue" description="Phosphoserine" evidence="6">
    <location>
        <position position="192"/>
    </location>
</feature>
<name>MKK1_YEAST</name>
<protein>
    <recommendedName>
        <fullName>MAP kinase kinase MKK1/SSP32</fullName>
        <ecNumber>2.7.12.2</ecNumber>
    </recommendedName>
</protein>
<evidence type="ECO:0000255" key="1">
    <source>
        <dbReference type="PROSITE-ProRule" id="PRU00159"/>
    </source>
</evidence>
<evidence type="ECO:0000255" key="2">
    <source>
        <dbReference type="PROSITE-ProRule" id="PRU10027"/>
    </source>
</evidence>
<evidence type="ECO:0000256" key="3">
    <source>
        <dbReference type="SAM" id="MobiDB-lite"/>
    </source>
</evidence>
<evidence type="ECO:0000269" key="4">
    <source>
    </source>
</evidence>
<evidence type="ECO:0000305" key="5"/>
<evidence type="ECO:0007744" key="6">
    <source>
    </source>
</evidence>